<gene>
    <name evidence="1" type="primary">carB</name>
    <name type="synonym">cpaB</name>
    <name type="ordered locus">BSU11240</name>
</gene>
<evidence type="ECO:0000255" key="1">
    <source>
        <dbReference type="HAMAP-Rule" id="MF_01210"/>
    </source>
</evidence>
<evidence type="ECO:0000305" key="2"/>
<dbReference type="EC" id="6.3.4.16" evidence="1"/>
<dbReference type="EC" id="6.3.5.5" evidence="1"/>
<dbReference type="EMBL" id="Z26919">
    <property type="protein sequence ID" value="CAA81548.1"/>
    <property type="molecule type" value="Genomic_DNA"/>
</dbReference>
<dbReference type="EMBL" id="AL009126">
    <property type="protein sequence ID" value="CAB12965.3"/>
    <property type="molecule type" value="Genomic_DNA"/>
</dbReference>
<dbReference type="EMBL" id="X53360">
    <property type="protein sequence ID" value="CAA37443.1"/>
    <property type="status" value="ALT_INIT"/>
    <property type="molecule type" value="Genomic_DNA"/>
</dbReference>
<dbReference type="PIR" id="I40377">
    <property type="entry name" value="I40377"/>
</dbReference>
<dbReference type="RefSeq" id="NP_389006.3">
    <property type="nucleotide sequence ID" value="NC_000964.3"/>
</dbReference>
<dbReference type="RefSeq" id="WP_003232982.1">
    <property type="nucleotide sequence ID" value="NZ_OZ025638.1"/>
</dbReference>
<dbReference type="SMR" id="P18185"/>
<dbReference type="FunCoup" id="P18185">
    <property type="interactions" value="447"/>
</dbReference>
<dbReference type="IntAct" id="P18185">
    <property type="interactions" value="1"/>
</dbReference>
<dbReference type="MINT" id="P18185"/>
<dbReference type="STRING" id="224308.BSU11240"/>
<dbReference type="PaxDb" id="224308-BSU11240"/>
<dbReference type="EnsemblBacteria" id="CAB12965">
    <property type="protein sequence ID" value="CAB12965"/>
    <property type="gene ID" value="BSU_11240"/>
</dbReference>
<dbReference type="GeneID" id="939353"/>
<dbReference type="KEGG" id="bsu:BSU11240"/>
<dbReference type="PATRIC" id="fig|224308.179.peg.1209"/>
<dbReference type="eggNOG" id="COG0458">
    <property type="taxonomic scope" value="Bacteria"/>
</dbReference>
<dbReference type="InParanoid" id="P18185"/>
<dbReference type="OrthoDB" id="9804197at2"/>
<dbReference type="PhylomeDB" id="P18185"/>
<dbReference type="BioCyc" id="BSUB:BSU11240-MONOMER"/>
<dbReference type="SABIO-RK" id="P18185"/>
<dbReference type="UniPathway" id="UPA00068">
    <property type="reaction ID" value="UER00171"/>
</dbReference>
<dbReference type="Proteomes" id="UP000001570">
    <property type="component" value="Chromosome"/>
</dbReference>
<dbReference type="GO" id="GO:0005737">
    <property type="term" value="C:cytoplasm"/>
    <property type="evidence" value="ECO:0000318"/>
    <property type="project" value="GO_Central"/>
</dbReference>
<dbReference type="GO" id="GO:0005524">
    <property type="term" value="F:ATP binding"/>
    <property type="evidence" value="ECO:0007669"/>
    <property type="project" value="UniProtKB-UniRule"/>
</dbReference>
<dbReference type="GO" id="GO:0004087">
    <property type="term" value="F:carbamoyl-phosphate synthase (ammonia) activity"/>
    <property type="evidence" value="ECO:0007669"/>
    <property type="project" value="RHEA"/>
</dbReference>
<dbReference type="GO" id="GO:0004088">
    <property type="term" value="F:carbamoyl-phosphate synthase (glutamine-hydrolyzing) activity"/>
    <property type="evidence" value="ECO:0007669"/>
    <property type="project" value="UniProtKB-UniRule"/>
</dbReference>
<dbReference type="GO" id="GO:0046872">
    <property type="term" value="F:metal ion binding"/>
    <property type="evidence" value="ECO:0007669"/>
    <property type="project" value="UniProtKB-KW"/>
</dbReference>
<dbReference type="GO" id="GO:0044205">
    <property type="term" value="P:'de novo' UMP biosynthetic process"/>
    <property type="evidence" value="ECO:0007669"/>
    <property type="project" value="UniProtKB-UniRule"/>
</dbReference>
<dbReference type="GO" id="GO:0006541">
    <property type="term" value="P:glutamine metabolic process"/>
    <property type="evidence" value="ECO:0000318"/>
    <property type="project" value="GO_Central"/>
</dbReference>
<dbReference type="GO" id="GO:0006526">
    <property type="term" value="P:L-arginine biosynthetic process"/>
    <property type="evidence" value="ECO:0007669"/>
    <property type="project" value="UniProtKB-UniRule"/>
</dbReference>
<dbReference type="FunFam" id="1.10.1030.10:FF:000009">
    <property type="entry name" value="Carbamoyl-phosphate synthase large chain"/>
    <property type="match status" value="1"/>
</dbReference>
<dbReference type="FunFam" id="3.30.470.20:FF:000001">
    <property type="entry name" value="Carbamoyl-phosphate synthase large chain"/>
    <property type="match status" value="1"/>
</dbReference>
<dbReference type="FunFam" id="3.30.470.20:FF:000026">
    <property type="entry name" value="Carbamoyl-phosphate synthase large chain"/>
    <property type="match status" value="1"/>
</dbReference>
<dbReference type="FunFam" id="3.40.50.20:FF:000001">
    <property type="entry name" value="Carbamoyl-phosphate synthase large chain"/>
    <property type="match status" value="2"/>
</dbReference>
<dbReference type="Gene3D" id="3.40.50.20">
    <property type="match status" value="2"/>
</dbReference>
<dbReference type="Gene3D" id="3.30.1490.20">
    <property type="entry name" value="ATP-grasp fold, A domain"/>
    <property type="match status" value="1"/>
</dbReference>
<dbReference type="Gene3D" id="3.30.470.20">
    <property type="entry name" value="ATP-grasp fold, B domain"/>
    <property type="match status" value="2"/>
</dbReference>
<dbReference type="Gene3D" id="1.10.1030.10">
    <property type="entry name" value="Carbamoyl-phosphate synthetase, large subunit oligomerisation domain"/>
    <property type="match status" value="1"/>
</dbReference>
<dbReference type="HAMAP" id="MF_01210_B">
    <property type="entry name" value="CPSase_L_chain_B"/>
    <property type="match status" value="1"/>
</dbReference>
<dbReference type="InterPro" id="IPR011761">
    <property type="entry name" value="ATP-grasp"/>
</dbReference>
<dbReference type="InterPro" id="IPR013815">
    <property type="entry name" value="ATP_grasp_subdomain_1"/>
</dbReference>
<dbReference type="InterPro" id="IPR006275">
    <property type="entry name" value="CarbamoylP_synth_lsu"/>
</dbReference>
<dbReference type="InterPro" id="IPR005480">
    <property type="entry name" value="CarbamoylP_synth_lsu_oligo"/>
</dbReference>
<dbReference type="InterPro" id="IPR036897">
    <property type="entry name" value="CarbamoylP_synth_lsu_oligo_sf"/>
</dbReference>
<dbReference type="InterPro" id="IPR005479">
    <property type="entry name" value="CbamoylP_synth_lsu-like_ATP-bd"/>
</dbReference>
<dbReference type="InterPro" id="IPR005483">
    <property type="entry name" value="CbamoylP_synth_lsu_CPSase_dom"/>
</dbReference>
<dbReference type="InterPro" id="IPR011607">
    <property type="entry name" value="MGS-like_dom"/>
</dbReference>
<dbReference type="InterPro" id="IPR016185">
    <property type="entry name" value="PreATP-grasp_dom_sf"/>
</dbReference>
<dbReference type="NCBIfam" id="TIGR01369">
    <property type="entry name" value="CPSaseII_lrg"/>
    <property type="match status" value="1"/>
</dbReference>
<dbReference type="NCBIfam" id="NF003671">
    <property type="entry name" value="PRK05294.1"/>
    <property type="match status" value="1"/>
</dbReference>
<dbReference type="NCBIfam" id="NF009455">
    <property type="entry name" value="PRK12815.1"/>
    <property type="match status" value="1"/>
</dbReference>
<dbReference type="PANTHER" id="PTHR11405:SF53">
    <property type="entry name" value="CARBAMOYL-PHOSPHATE SYNTHASE [AMMONIA], MITOCHONDRIAL"/>
    <property type="match status" value="1"/>
</dbReference>
<dbReference type="PANTHER" id="PTHR11405">
    <property type="entry name" value="CARBAMOYLTRANSFERASE FAMILY MEMBER"/>
    <property type="match status" value="1"/>
</dbReference>
<dbReference type="Pfam" id="PF02786">
    <property type="entry name" value="CPSase_L_D2"/>
    <property type="match status" value="2"/>
</dbReference>
<dbReference type="Pfam" id="PF02787">
    <property type="entry name" value="CPSase_L_D3"/>
    <property type="match status" value="1"/>
</dbReference>
<dbReference type="PRINTS" id="PR00098">
    <property type="entry name" value="CPSASE"/>
</dbReference>
<dbReference type="SMART" id="SM01096">
    <property type="entry name" value="CPSase_L_D3"/>
    <property type="match status" value="1"/>
</dbReference>
<dbReference type="SUPFAM" id="SSF48108">
    <property type="entry name" value="Carbamoyl phosphate synthetase, large subunit connection domain"/>
    <property type="match status" value="1"/>
</dbReference>
<dbReference type="SUPFAM" id="SSF56059">
    <property type="entry name" value="Glutathione synthetase ATP-binding domain-like"/>
    <property type="match status" value="2"/>
</dbReference>
<dbReference type="SUPFAM" id="SSF52440">
    <property type="entry name" value="PreATP-grasp domain"/>
    <property type="match status" value="2"/>
</dbReference>
<dbReference type="PROSITE" id="PS50975">
    <property type="entry name" value="ATP_GRASP"/>
    <property type="match status" value="2"/>
</dbReference>
<dbReference type="PROSITE" id="PS00866">
    <property type="entry name" value="CPSASE_1"/>
    <property type="match status" value="2"/>
</dbReference>
<dbReference type="PROSITE" id="PS00867">
    <property type="entry name" value="CPSASE_2"/>
    <property type="match status" value="2"/>
</dbReference>
<dbReference type="PROSITE" id="PS51855">
    <property type="entry name" value="MGS"/>
    <property type="match status" value="1"/>
</dbReference>
<organism>
    <name type="scientific">Bacillus subtilis (strain 168)</name>
    <dbReference type="NCBI Taxonomy" id="224308"/>
    <lineage>
        <taxon>Bacteria</taxon>
        <taxon>Bacillati</taxon>
        <taxon>Bacillota</taxon>
        <taxon>Bacilli</taxon>
        <taxon>Bacillales</taxon>
        <taxon>Bacillaceae</taxon>
        <taxon>Bacillus</taxon>
    </lineage>
</organism>
<reference key="1">
    <citation type="journal article" date="1994" name="Microbiology">
        <title>Sequence and analysis of the citrulline biosynthetic operon argC-F from Bacillus subtilis.</title>
        <authorList>
            <person name="O'Reilly M."/>
            <person name="Devine K.M."/>
        </authorList>
    </citation>
    <scope>NUCLEOTIDE SEQUENCE [GENOMIC DNA]</scope>
    <source>
        <strain>168</strain>
    </source>
</reference>
<reference key="2">
    <citation type="journal article" date="1997" name="Nature">
        <title>The complete genome sequence of the Gram-positive bacterium Bacillus subtilis.</title>
        <authorList>
            <person name="Kunst F."/>
            <person name="Ogasawara N."/>
            <person name="Moszer I."/>
            <person name="Albertini A.M."/>
            <person name="Alloni G."/>
            <person name="Azevedo V."/>
            <person name="Bertero M.G."/>
            <person name="Bessieres P."/>
            <person name="Bolotin A."/>
            <person name="Borchert S."/>
            <person name="Borriss R."/>
            <person name="Boursier L."/>
            <person name="Brans A."/>
            <person name="Braun M."/>
            <person name="Brignell S.C."/>
            <person name="Bron S."/>
            <person name="Brouillet S."/>
            <person name="Bruschi C.V."/>
            <person name="Caldwell B."/>
            <person name="Capuano V."/>
            <person name="Carter N.M."/>
            <person name="Choi S.-K."/>
            <person name="Codani J.-J."/>
            <person name="Connerton I.F."/>
            <person name="Cummings N.J."/>
            <person name="Daniel R.A."/>
            <person name="Denizot F."/>
            <person name="Devine K.M."/>
            <person name="Duesterhoeft A."/>
            <person name="Ehrlich S.D."/>
            <person name="Emmerson P.T."/>
            <person name="Entian K.-D."/>
            <person name="Errington J."/>
            <person name="Fabret C."/>
            <person name="Ferrari E."/>
            <person name="Foulger D."/>
            <person name="Fritz C."/>
            <person name="Fujita M."/>
            <person name="Fujita Y."/>
            <person name="Fuma S."/>
            <person name="Galizzi A."/>
            <person name="Galleron N."/>
            <person name="Ghim S.-Y."/>
            <person name="Glaser P."/>
            <person name="Goffeau A."/>
            <person name="Golightly E.J."/>
            <person name="Grandi G."/>
            <person name="Guiseppi G."/>
            <person name="Guy B.J."/>
            <person name="Haga K."/>
            <person name="Haiech J."/>
            <person name="Harwood C.R."/>
            <person name="Henaut A."/>
            <person name="Hilbert H."/>
            <person name="Holsappel S."/>
            <person name="Hosono S."/>
            <person name="Hullo M.-F."/>
            <person name="Itaya M."/>
            <person name="Jones L.-M."/>
            <person name="Joris B."/>
            <person name="Karamata D."/>
            <person name="Kasahara Y."/>
            <person name="Klaerr-Blanchard M."/>
            <person name="Klein C."/>
            <person name="Kobayashi Y."/>
            <person name="Koetter P."/>
            <person name="Koningstein G."/>
            <person name="Krogh S."/>
            <person name="Kumano M."/>
            <person name="Kurita K."/>
            <person name="Lapidus A."/>
            <person name="Lardinois S."/>
            <person name="Lauber J."/>
            <person name="Lazarevic V."/>
            <person name="Lee S.-M."/>
            <person name="Levine A."/>
            <person name="Liu H."/>
            <person name="Masuda S."/>
            <person name="Mauel C."/>
            <person name="Medigue C."/>
            <person name="Medina N."/>
            <person name="Mellado R.P."/>
            <person name="Mizuno M."/>
            <person name="Moestl D."/>
            <person name="Nakai S."/>
            <person name="Noback M."/>
            <person name="Noone D."/>
            <person name="O'Reilly M."/>
            <person name="Ogawa K."/>
            <person name="Ogiwara A."/>
            <person name="Oudega B."/>
            <person name="Park S.-H."/>
            <person name="Parro V."/>
            <person name="Pohl T.M."/>
            <person name="Portetelle D."/>
            <person name="Porwollik S."/>
            <person name="Prescott A.M."/>
            <person name="Presecan E."/>
            <person name="Pujic P."/>
            <person name="Purnelle B."/>
            <person name="Rapoport G."/>
            <person name="Rey M."/>
            <person name="Reynolds S."/>
            <person name="Rieger M."/>
            <person name="Rivolta C."/>
            <person name="Rocha E."/>
            <person name="Roche B."/>
            <person name="Rose M."/>
            <person name="Sadaie Y."/>
            <person name="Sato T."/>
            <person name="Scanlan E."/>
            <person name="Schleich S."/>
            <person name="Schroeter R."/>
            <person name="Scoffone F."/>
            <person name="Sekiguchi J."/>
            <person name="Sekowska A."/>
            <person name="Seror S.J."/>
            <person name="Serror P."/>
            <person name="Shin B.-S."/>
            <person name="Soldo B."/>
            <person name="Sorokin A."/>
            <person name="Tacconi E."/>
            <person name="Takagi T."/>
            <person name="Takahashi H."/>
            <person name="Takemaru K."/>
            <person name="Takeuchi M."/>
            <person name="Tamakoshi A."/>
            <person name="Tanaka T."/>
            <person name="Terpstra P."/>
            <person name="Tognoni A."/>
            <person name="Tosato V."/>
            <person name="Uchiyama S."/>
            <person name="Vandenbol M."/>
            <person name="Vannier F."/>
            <person name="Vassarotti A."/>
            <person name="Viari A."/>
            <person name="Wambutt R."/>
            <person name="Wedler E."/>
            <person name="Wedler H."/>
            <person name="Weitzenegger T."/>
            <person name="Winters P."/>
            <person name="Wipat A."/>
            <person name="Yamamoto H."/>
            <person name="Yamane K."/>
            <person name="Yasumoto K."/>
            <person name="Yata K."/>
            <person name="Yoshida K."/>
            <person name="Yoshikawa H.-F."/>
            <person name="Zumstein E."/>
            <person name="Yoshikawa H."/>
            <person name="Danchin A."/>
        </authorList>
    </citation>
    <scope>NUCLEOTIDE SEQUENCE [LARGE SCALE GENOMIC DNA]</scope>
    <source>
        <strain>168</strain>
    </source>
</reference>
<reference key="3">
    <citation type="journal article" date="1999" name="Genome Res.">
        <title>Detecting and analyzing DNA sequencing errors: toward a higher quality of the Bacillus subtilis genome sequence.</title>
        <authorList>
            <person name="Medigue C."/>
            <person name="Rose M."/>
            <person name="Viari A."/>
            <person name="Danchin A."/>
        </authorList>
    </citation>
    <scope>SEQUENCE REVISION</scope>
</reference>
<reference key="4">
    <citation type="journal article" date="2009" name="Microbiology">
        <title>From a consortium sequence to a unified sequence: the Bacillus subtilis 168 reference genome a decade later.</title>
        <authorList>
            <person name="Barbe V."/>
            <person name="Cruveiller S."/>
            <person name="Kunst F."/>
            <person name="Lenoble P."/>
            <person name="Meurice G."/>
            <person name="Sekowska A."/>
            <person name="Vallenet D."/>
            <person name="Wang T."/>
            <person name="Moszer I."/>
            <person name="Medigue C."/>
            <person name="Danchin A."/>
        </authorList>
    </citation>
    <scope>SEQUENCE REVISION TO 397; 510 AND 626</scope>
</reference>
<reference key="5">
    <citation type="journal article" date="1990" name="Nucleic Acids Res.">
        <title>Nucleotide sequence of the Bacillus subtilis argF gene encoding ornithine carbamoyltransferase.</title>
        <authorList>
            <person name="Mountain A."/>
            <person name="Smith M.C.M."/>
            <person name="Baumberg S."/>
        </authorList>
    </citation>
    <scope>NUCLEOTIDE SEQUENCE [GENOMIC DNA] OF 873-1030</scope>
    <source>
        <strain>168 / EMG50</strain>
    </source>
</reference>
<name>CARY_BACSU</name>
<accession>P18185</accession>
<proteinExistence type="inferred from homology"/>
<comment type="function">
    <text evidence="2">Large subunit of the glutamine-dependent carbamoyl phosphate synthetase (CPSase). CPSase catalyzes the formation of carbamoyl phosphate from the ammonia moiety of glutamine, carbonate, and phosphate donated by ATP, constituting the first step of the biosynthetic pathway leading to arginine and/or urea. The large subunit (synthetase) binds the substrates ammonia (free or transferred from glutamine from the small subunit), hydrogencarbonate and ATP and carries out an ATP-coupled ligase reaction, activating hydrogencarbonate by forming carboxy phosphate which reacts with ammonia to form carbamoyl phosphate.</text>
</comment>
<comment type="catalytic activity">
    <reaction evidence="1">
        <text>hydrogencarbonate + L-glutamine + 2 ATP + H2O = carbamoyl phosphate + L-glutamate + 2 ADP + phosphate + 2 H(+)</text>
        <dbReference type="Rhea" id="RHEA:18633"/>
        <dbReference type="ChEBI" id="CHEBI:15377"/>
        <dbReference type="ChEBI" id="CHEBI:15378"/>
        <dbReference type="ChEBI" id="CHEBI:17544"/>
        <dbReference type="ChEBI" id="CHEBI:29985"/>
        <dbReference type="ChEBI" id="CHEBI:30616"/>
        <dbReference type="ChEBI" id="CHEBI:43474"/>
        <dbReference type="ChEBI" id="CHEBI:58228"/>
        <dbReference type="ChEBI" id="CHEBI:58359"/>
        <dbReference type="ChEBI" id="CHEBI:456216"/>
        <dbReference type="EC" id="6.3.5.5"/>
    </reaction>
</comment>
<comment type="catalytic activity">
    <molecule>Carbamoyl phosphate synthase arginine-specific large chain</molecule>
    <reaction evidence="1">
        <text>hydrogencarbonate + NH4(+) + 2 ATP = carbamoyl phosphate + 2 ADP + phosphate + 2 H(+)</text>
        <dbReference type="Rhea" id="RHEA:18029"/>
        <dbReference type="ChEBI" id="CHEBI:15378"/>
        <dbReference type="ChEBI" id="CHEBI:17544"/>
        <dbReference type="ChEBI" id="CHEBI:28938"/>
        <dbReference type="ChEBI" id="CHEBI:30616"/>
        <dbReference type="ChEBI" id="CHEBI:43474"/>
        <dbReference type="ChEBI" id="CHEBI:58228"/>
        <dbReference type="ChEBI" id="CHEBI:456216"/>
        <dbReference type="EC" id="6.3.4.16"/>
    </reaction>
</comment>
<comment type="cofactor">
    <cofactor evidence="1">
        <name>Mg(2+)</name>
        <dbReference type="ChEBI" id="CHEBI:18420"/>
    </cofactor>
    <cofactor evidence="1">
        <name>Mn(2+)</name>
        <dbReference type="ChEBI" id="CHEBI:29035"/>
    </cofactor>
    <text evidence="1">Binds 4 Mg(2+) or Mn(2+) ions per subunit.</text>
</comment>
<comment type="pathway">
    <text evidence="1">Amino-acid biosynthesis; L-arginine biosynthesis; carbamoyl phosphate from bicarbonate: step 1/1.</text>
</comment>
<comment type="subunit">
    <text evidence="1">Composed of two chains; the small (or glutamine) chain promotes the hydrolysis of glutamine to ammonia, which is used by the large (or ammonia) chain to synthesize carbamoyl phosphate. Tetramer of heterodimers (alpha,beta)4.</text>
</comment>
<comment type="domain">
    <text evidence="1">The large subunit is composed of 2 ATP-grasp domains that are involved in binding the 2 ATP molecules needed for carbamoyl phosphate synthesis. The N-terminal ATP-grasp domain (referred to as the carboxyphosphate synthetic component) catalyzes the ATP-dependent phosphorylation of hydrogencarbonate to carboxyphosphate and the subsequent nucleophilic attack by ammonia to form a carbamate intermediate. The C-terminal ATP-grasp domain (referred to as the carbamoyl phosphate synthetic component) then catalyzes the phosphorylation of carbamate with the second ATP to form the end product carbamoyl phosphate. The reactive and unstable enzyme intermediates are sequentially channeled from one active site to the next through the interior of the protein over a distance of at least 96 A.</text>
</comment>
<comment type="similarity">
    <text evidence="1">Belongs to the CarB family.</text>
</comment>
<comment type="sequence caution" evidence="2">
    <conflict type="erroneous initiation">
        <sequence resource="EMBL-CDS" id="CAA37443"/>
    </conflict>
</comment>
<sequence>MPKDTSISSILVIGSGPIIIGQAAEFDYSGTQGCIALKEEGYRVILVNSNPATIMTDEAFADEIYFEPLTAESLTAIIKKERPDGLLANLGGQTALNLAVELEETGVLKEHGVKLLGTSVETIQKGEDREKFRSLMNELKQPVPESEIVDNEADALHFAESIGFPVIIRPAYTLGGKGGGIAPDKEAFTAMIKQALLASPINQCLVEKSIAGFKEIEYEVMRDSNNTCITVCNMENIDPVGVHTGDSIVVAPSQTLTDEDYQMLRTASLTIISALDVVGGCNIQFALDPFSKQYYVIEVNPRVSRSSALASKATGYPIAKMAAKLAVGYTLDELKNPLTGSTYASFEPALDYVIVKFPRWPFDKFKNADRKLGTKMKATGEVMAIERNLEAAIQKAAASLELKNIGTHLPELSGLSIDTLWDLAITPDDRRFFVVMELLSRSVSIDDIHEKTKIDPFFLHTFDNIIKLENRLMEAGSDLSFELLKKAKEKGFSDATIASLISKTEEEVRALRKEMGITPSFKIVDTCAAEFDAKTNYFYSTYFGETDGDISRKEKKRALIIGSGPIRIGQGVEFDYSAVHGVLTLQELGFETIMINNNPETVSTDYEIADRLYFEPMTTEHIVNVAEQENIDFAIVQFGGQTAINAAEALEKAGITLLGTSFQTLDVLEDRDQFYQLLDELGLKHAKGEIAYTKEEAASKASEIGYPVLIRPSYVIGGMGMIIVDSQAQLSQLLNDEDSMPYPILIDQYVSGKEVEIDLISDGEEVFIPTYTEHIERAGVHSGDSFAILPGPSITSGLQQGMKDAAQKIARKLSFKGIMNIQFVIDNGNILVLEVNPRASRTVPVVSKVMGVPMIPLATRLLAGASLKDLNPAVQNHHGVAVKFPVFSSHAIQDVDVKLGPEMKSTGEGMCVAYDSNSALKKIYTRVWSQKGSIYLQNVPEDVKELAENAGFTIHEGTFASWMEQEGNSLHINLSGSEEARKERLEAMTHGIPVFTEEETVRAFLQSGSGHPQPVSLKDLYKKEVASCTQ</sequence>
<protein>
    <recommendedName>
        <fullName evidence="2">Carbamoyl phosphate synthase arginine-specific large chain</fullName>
        <ecNumber evidence="1">6.3.4.16</ecNumber>
        <ecNumber evidence="1">6.3.5.5</ecNumber>
    </recommendedName>
    <alternativeName>
        <fullName evidence="1">Carbamoyl phosphate synthetase ammonia chain</fullName>
    </alternativeName>
</protein>
<keyword id="KW-0028">Amino-acid biosynthesis</keyword>
<keyword id="KW-0055">Arginine biosynthesis</keyword>
<keyword id="KW-0067">ATP-binding</keyword>
<keyword id="KW-0436">Ligase</keyword>
<keyword id="KW-0460">Magnesium</keyword>
<keyword id="KW-0464">Manganese</keyword>
<keyword id="KW-0479">Metal-binding</keyword>
<keyword id="KW-0547">Nucleotide-binding</keyword>
<keyword id="KW-0665">Pyrimidine biosynthesis</keyword>
<keyword id="KW-1185">Reference proteome</keyword>
<keyword id="KW-0677">Repeat</keyword>
<feature type="chain" id="PRO_0000144992" description="Carbamoyl phosphate synthase arginine-specific large chain">
    <location>
        <begin position="1"/>
        <end position="1030"/>
    </location>
</feature>
<feature type="domain" description="ATP-grasp 1" evidence="1">
    <location>
        <begin position="133"/>
        <end position="327"/>
    </location>
</feature>
<feature type="domain" description="ATP-grasp 2" evidence="1">
    <location>
        <begin position="675"/>
        <end position="863"/>
    </location>
</feature>
<feature type="domain" description="MGS-like" evidence="1">
    <location>
        <begin position="925"/>
        <end position="1027"/>
    </location>
</feature>
<feature type="region of interest" description="Carboxyphosphate synthetic domain" evidence="1">
    <location>
        <begin position="1"/>
        <end position="401"/>
    </location>
</feature>
<feature type="region of interest" description="Oligomerization domain" evidence="1">
    <location>
        <begin position="402"/>
        <end position="548"/>
    </location>
</feature>
<feature type="region of interest" description="Carbamoyl phosphate synthetic domain" evidence="1">
    <location>
        <begin position="549"/>
        <end position="928"/>
    </location>
</feature>
<feature type="region of interest" description="Allosteric domain" evidence="1">
    <location>
        <begin position="929"/>
        <end position="1030"/>
    </location>
</feature>
<feature type="binding site" evidence="1">
    <location>
        <position position="129"/>
    </location>
    <ligand>
        <name>ATP</name>
        <dbReference type="ChEBI" id="CHEBI:30616"/>
        <label>1</label>
    </ligand>
</feature>
<feature type="binding site" evidence="1">
    <location>
        <position position="169"/>
    </location>
    <ligand>
        <name>ATP</name>
        <dbReference type="ChEBI" id="CHEBI:30616"/>
        <label>1</label>
    </ligand>
</feature>
<feature type="binding site" evidence="1">
    <location>
        <position position="175"/>
    </location>
    <ligand>
        <name>ATP</name>
        <dbReference type="ChEBI" id="CHEBI:30616"/>
        <label>1</label>
    </ligand>
</feature>
<feature type="binding site" evidence="1">
    <location>
        <position position="176"/>
    </location>
    <ligand>
        <name>ATP</name>
        <dbReference type="ChEBI" id="CHEBI:30616"/>
        <label>1</label>
    </ligand>
</feature>
<feature type="binding site" evidence="1">
    <location>
        <position position="208"/>
    </location>
    <ligand>
        <name>ATP</name>
        <dbReference type="ChEBI" id="CHEBI:30616"/>
        <label>1</label>
    </ligand>
</feature>
<feature type="binding site" evidence="1">
    <location>
        <position position="210"/>
    </location>
    <ligand>
        <name>ATP</name>
        <dbReference type="ChEBI" id="CHEBI:30616"/>
        <label>1</label>
    </ligand>
</feature>
<feature type="binding site" evidence="1">
    <location>
        <position position="215"/>
    </location>
    <ligand>
        <name>ATP</name>
        <dbReference type="ChEBI" id="CHEBI:30616"/>
        <label>1</label>
    </ligand>
</feature>
<feature type="binding site" evidence="1">
    <location>
        <position position="241"/>
    </location>
    <ligand>
        <name>ATP</name>
        <dbReference type="ChEBI" id="CHEBI:30616"/>
        <label>1</label>
    </ligand>
</feature>
<feature type="binding site" evidence="1">
    <location>
        <position position="242"/>
    </location>
    <ligand>
        <name>ATP</name>
        <dbReference type="ChEBI" id="CHEBI:30616"/>
        <label>1</label>
    </ligand>
</feature>
<feature type="binding site" evidence="1">
    <location>
        <position position="243"/>
    </location>
    <ligand>
        <name>ATP</name>
        <dbReference type="ChEBI" id="CHEBI:30616"/>
        <label>1</label>
    </ligand>
</feature>
<feature type="binding site" evidence="1">
    <location>
        <position position="284"/>
    </location>
    <ligand>
        <name>ATP</name>
        <dbReference type="ChEBI" id="CHEBI:30616"/>
        <label>1</label>
    </ligand>
</feature>
<feature type="binding site" evidence="1">
    <location>
        <position position="284"/>
    </location>
    <ligand>
        <name>Mg(2+)</name>
        <dbReference type="ChEBI" id="CHEBI:18420"/>
        <label>1</label>
    </ligand>
</feature>
<feature type="binding site" evidence="1">
    <location>
        <position position="284"/>
    </location>
    <ligand>
        <name>Mn(2+)</name>
        <dbReference type="ChEBI" id="CHEBI:29035"/>
        <label>1</label>
    </ligand>
</feature>
<feature type="binding site" evidence="1">
    <location>
        <position position="298"/>
    </location>
    <ligand>
        <name>ATP</name>
        <dbReference type="ChEBI" id="CHEBI:30616"/>
        <label>1</label>
    </ligand>
</feature>
<feature type="binding site" evidence="1">
    <location>
        <position position="298"/>
    </location>
    <ligand>
        <name>Mg(2+)</name>
        <dbReference type="ChEBI" id="CHEBI:18420"/>
        <label>1</label>
    </ligand>
</feature>
<feature type="binding site" evidence="1">
    <location>
        <position position="298"/>
    </location>
    <ligand>
        <name>Mg(2+)</name>
        <dbReference type="ChEBI" id="CHEBI:18420"/>
        <label>2</label>
    </ligand>
</feature>
<feature type="binding site" evidence="1">
    <location>
        <position position="298"/>
    </location>
    <ligand>
        <name>Mn(2+)</name>
        <dbReference type="ChEBI" id="CHEBI:29035"/>
        <label>1</label>
    </ligand>
</feature>
<feature type="binding site" evidence="1">
    <location>
        <position position="298"/>
    </location>
    <ligand>
        <name>Mn(2+)</name>
        <dbReference type="ChEBI" id="CHEBI:29035"/>
        <label>2</label>
    </ligand>
</feature>
<feature type="binding site" evidence="1">
    <location>
        <position position="300"/>
    </location>
    <ligand>
        <name>Mg(2+)</name>
        <dbReference type="ChEBI" id="CHEBI:18420"/>
        <label>2</label>
    </ligand>
</feature>
<feature type="binding site" evidence="1">
    <location>
        <position position="300"/>
    </location>
    <ligand>
        <name>Mn(2+)</name>
        <dbReference type="ChEBI" id="CHEBI:29035"/>
        <label>2</label>
    </ligand>
</feature>
<feature type="binding site" evidence="1">
    <location>
        <position position="711"/>
    </location>
    <ligand>
        <name>ATP</name>
        <dbReference type="ChEBI" id="CHEBI:30616"/>
        <label>2</label>
    </ligand>
</feature>
<feature type="binding site" evidence="1">
    <location>
        <position position="748"/>
    </location>
    <ligand>
        <name>ATP</name>
        <dbReference type="ChEBI" id="CHEBI:30616"/>
        <label>2</label>
    </ligand>
</feature>
<feature type="binding site" evidence="1">
    <location>
        <position position="750"/>
    </location>
    <ligand>
        <name>ATP</name>
        <dbReference type="ChEBI" id="CHEBI:30616"/>
        <label>2</label>
    </ligand>
</feature>
<feature type="binding site" evidence="1">
    <location>
        <position position="754"/>
    </location>
    <ligand>
        <name>ATP</name>
        <dbReference type="ChEBI" id="CHEBI:30616"/>
        <label>2</label>
    </ligand>
</feature>
<feature type="binding site" evidence="1">
    <location>
        <position position="779"/>
    </location>
    <ligand>
        <name>ATP</name>
        <dbReference type="ChEBI" id="CHEBI:30616"/>
        <label>2</label>
    </ligand>
</feature>
<feature type="binding site" evidence="1">
    <location>
        <position position="780"/>
    </location>
    <ligand>
        <name>ATP</name>
        <dbReference type="ChEBI" id="CHEBI:30616"/>
        <label>2</label>
    </ligand>
</feature>
<feature type="binding site" evidence="1">
    <location>
        <position position="781"/>
    </location>
    <ligand>
        <name>ATP</name>
        <dbReference type="ChEBI" id="CHEBI:30616"/>
        <label>2</label>
    </ligand>
</feature>
<feature type="binding site" evidence="1">
    <location>
        <position position="782"/>
    </location>
    <ligand>
        <name>ATP</name>
        <dbReference type="ChEBI" id="CHEBI:30616"/>
        <label>2</label>
    </ligand>
</feature>
<feature type="binding site" evidence="1">
    <location>
        <position position="822"/>
    </location>
    <ligand>
        <name>ATP</name>
        <dbReference type="ChEBI" id="CHEBI:30616"/>
        <label>2</label>
    </ligand>
</feature>
<feature type="binding site" evidence="1">
    <location>
        <position position="822"/>
    </location>
    <ligand>
        <name>Mg(2+)</name>
        <dbReference type="ChEBI" id="CHEBI:18420"/>
        <label>3</label>
    </ligand>
</feature>
<feature type="binding site" evidence="1">
    <location>
        <position position="822"/>
    </location>
    <ligand>
        <name>Mn(2+)</name>
        <dbReference type="ChEBI" id="CHEBI:29035"/>
        <label>3</label>
    </ligand>
</feature>
<feature type="binding site" evidence="1">
    <location>
        <position position="834"/>
    </location>
    <ligand>
        <name>ATP</name>
        <dbReference type="ChEBI" id="CHEBI:30616"/>
        <label>2</label>
    </ligand>
</feature>
<feature type="binding site" evidence="1">
    <location>
        <position position="834"/>
    </location>
    <ligand>
        <name>Mg(2+)</name>
        <dbReference type="ChEBI" id="CHEBI:18420"/>
        <label>3</label>
    </ligand>
</feature>
<feature type="binding site" evidence="1">
    <location>
        <position position="834"/>
    </location>
    <ligand>
        <name>Mg(2+)</name>
        <dbReference type="ChEBI" id="CHEBI:18420"/>
        <label>4</label>
    </ligand>
</feature>
<feature type="binding site" evidence="1">
    <location>
        <position position="834"/>
    </location>
    <ligand>
        <name>Mn(2+)</name>
        <dbReference type="ChEBI" id="CHEBI:29035"/>
        <label>3</label>
    </ligand>
</feature>
<feature type="binding site" evidence="1">
    <location>
        <position position="834"/>
    </location>
    <ligand>
        <name>Mn(2+)</name>
        <dbReference type="ChEBI" id="CHEBI:29035"/>
        <label>4</label>
    </ligand>
</feature>
<feature type="binding site" evidence="1">
    <location>
        <position position="836"/>
    </location>
    <ligand>
        <name>Mg(2+)</name>
        <dbReference type="ChEBI" id="CHEBI:18420"/>
        <label>4</label>
    </ligand>
</feature>
<feature type="binding site" evidence="1">
    <location>
        <position position="836"/>
    </location>
    <ligand>
        <name>Mn(2+)</name>
        <dbReference type="ChEBI" id="CHEBI:29035"/>
        <label>4</label>
    </ligand>
</feature>
<feature type="sequence conflict" description="In Ref. 1; CAA81548." evidence="2" ref="1">
    <original>A</original>
    <variation>G</variation>
    <location>
        <position position="397"/>
    </location>
</feature>
<feature type="sequence conflict" description="In Ref. 1; CAA81548." evidence="2" ref="1">
    <original>A</original>
    <variation>R</variation>
    <location>
        <position position="510"/>
    </location>
</feature>
<feature type="sequence conflict" description="In Ref. 1; CAA81548." evidence="2" ref="1">
    <original>A</original>
    <variation>R</variation>
    <location>
        <position position="626"/>
    </location>
</feature>
<feature type="sequence conflict" description="In Ref. 1; CAA81548." evidence="2" ref="1">
    <original>MIPL</original>
    <variation>R</variation>
    <location>
        <begin position="854"/>
        <end position="857"/>
    </location>
</feature>
<feature type="sequence conflict" description="In Ref. 5; CAA37443." evidence="2" ref="5">
    <original>G</original>
    <variation>A</variation>
    <location>
        <position position="879"/>
    </location>
</feature>
<feature type="sequence conflict" description="In Ref. 5; CAA37443." evidence="2" ref="5">
    <original>A</original>
    <variation>R</variation>
    <location>
        <position position="913"/>
    </location>
</feature>
<feature type="sequence conflict" description="In Ref. 5; CAA37443." evidence="2" ref="5">
    <original>F</original>
    <variation>S</variation>
    <location>
        <position position="1004"/>
    </location>
</feature>